<dbReference type="EMBL" id="AB006424">
    <property type="protein sequence ID" value="BAA33102.1"/>
    <property type="molecule type" value="Genomic_DNA"/>
</dbReference>
<dbReference type="EMBL" id="AL009126">
    <property type="protein sequence ID" value="CAB11998.1"/>
    <property type="molecule type" value="Genomic_DNA"/>
</dbReference>
<dbReference type="PIR" id="A69748">
    <property type="entry name" value="A69748"/>
</dbReference>
<dbReference type="RefSeq" id="NP_388086.1">
    <property type="nucleotide sequence ID" value="NC_000964.3"/>
</dbReference>
<dbReference type="RefSeq" id="WP_003246309.1">
    <property type="nucleotide sequence ID" value="NZ_OZ025638.1"/>
</dbReference>
<dbReference type="SMR" id="O31436"/>
<dbReference type="FunCoup" id="O31436">
    <property type="interactions" value="29"/>
</dbReference>
<dbReference type="STRING" id="224308.BSU02040"/>
<dbReference type="PaxDb" id="224308-BSU02040"/>
<dbReference type="EnsemblBacteria" id="CAB11998">
    <property type="protein sequence ID" value="CAB11998"/>
    <property type="gene ID" value="BSU_02040"/>
</dbReference>
<dbReference type="GeneID" id="938489"/>
<dbReference type="KEGG" id="bsu:BSU02040"/>
<dbReference type="PATRIC" id="fig|224308.179.peg.210"/>
<dbReference type="eggNOG" id="ENOG5033KR7">
    <property type="taxonomic scope" value="Bacteria"/>
</dbReference>
<dbReference type="InParanoid" id="O31436"/>
<dbReference type="OrthoDB" id="2048831at2"/>
<dbReference type="BioCyc" id="BSUB:BSU02040-MONOMER"/>
<dbReference type="Proteomes" id="UP000001570">
    <property type="component" value="Chromosome"/>
</dbReference>
<feature type="signal peptide" evidence="1">
    <location>
        <begin position="1"/>
        <end position="25"/>
    </location>
</feature>
<feature type="chain" id="PRO_0000375901" description="Uncharacterized protein YbdN">
    <location>
        <begin position="26"/>
        <end position="285"/>
    </location>
</feature>
<proteinExistence type="inferred from homology"/>
<gene>
    <name type="primary">ybdN</name>
    <name type="ordered locus">BSU02040</name>
</gene>
<protein>
    <recommendedName>
        <fullName>Uncharacterized protein YbdN</fullName>
    </recommendedName>
</protein>
<keyword id="KW-1185">Reference proteome</keyword>
<keyword id="KW-0732">Signal</keyword>
<reference key="1">
    <citation type="submission" date="1997-07" db="EMBL/GenBank/DDBJ databases">
        <title>Sequence analysis of the 70kb region between 17 and 23 degree of the Bacillus subtilis chromosome.</title>
        <authorList>
            <person name="Haga K."/>
            <person name="Liu H."/>
            <person name="Yasumoto K."/>
            <person name="Takahashi H."/>
            <person name="Yoshikawa H."/>
        </authorList>
    </citation>
    <scope>NUCLEOTIDE SEQUENCE [GENOMIC DNA]</scope>
    <source>
        <strain>168</strain>
    </source>
</reference>
<reference key="2">
    <citation type="journal article" date="1997" name="Nature">
        <title>The complete genome sequence of the Gram-positive bacterium Bacillus subtilis.</title>
        <authorList>
            <person name="Kunst F."/>
            <person name="Ogasawara N."/>
            <person name="Moszer I."/>
            <person name="Albertini A.M."/>
            <person name="Alloni G."/>
            <person name="Azevedo V."/>
            <person name="Bertero M.G."/>
            <person name="Bessieres P."/>
            <person name="Bolotin A."/>
            <person name="Borchert S."/>
            <person name="Borriss R."/>
            <person name="Boursier L."/>
            <person name="Brans A."/>
            <person name="Braun M."/>
            <person name="Brignell S.C."/>
            <person name="Bron S."/>
            <person name="Brouillet S."/>
            <person name="Bruschi C.V."/>
            <person name="Caldwell B."/>
            <person name="Capuano V."/>
            <person name="Carter N.M."/>
            <person name="Choi S.-K."/>
            <person name="Codani J.-J."/>
            <person name="Connerton I.F."/>
            <person name="Cummings N.J."/>
            <person name="Daniel R.A."/>
            <person name="Denizot F."/>
            <person name="Devine K.M."/>
            <person name="Duesterhoeft A."/>
            <person name="Ehrlich S.D."/>
            <person name="Emmerson P.T."/>
            <person name="Entian K.-D."/>
            <person name="Errington J."/>
            <person name="Fabret C."/>
            <person name="Ferrari E."/>
            <person name="Foulger D."/>
            <person name="Fritz C."/>
            <person name="Fujita M."/>
            <person name="Fujita Y."/>
            <person name="Fuma S."/>
            <person name="Galizzi A."/>
            <person name="Galleron N."/>
            <person name="Ghim S.-Y."/>
            <person name="Glaser P."/>
            <person name="Goffeau A."/>
            <person name="Golightly E.J."/>
            <person name="Grandi G."/>
            <person name="Guiseppi G."/>
            <person name="Guy B.J."/>
            <person name="Haga K."/>
            <person name="Haiech J."/>
            <person name="Harwood C.R."/>
            <person name="Henaut A."/>
            <person name="Hilbert H."/>
            <person name="Holsappel S."/>
            <person name="Hosono S."/>
            <person name="Hullo M.-F."/>
            <person name="Itaya M."/>
            <person name="Jones L.-M."/>
            <person name="Joris B."/>
            <person name="Karamata D."/>
            <person name="Kasahara Y."/>
            <person name="Klaerr-Blanchard M."/>
            <person name="Klein C."/>
            <person name="Kobayashi Y."/>
            <person name="Koetter P."/>
            <person name="Koningstein G."/>
            <person name="Krogh S."/>
            <person name="Kumano M."/>
            <person name="Kurita K."/>
            <person name="Lapidus A."/>
            <person name="Lardinois S."/>
            <person name="Lauber J."/>
            <person name="Lazarevic V."/>
            <person name="Lee S.-M."/>
            <person name="Levine A."/>
            <person name="Liu H."/>
            <person name="Masuda S."/>
            <person name="Mauel C."/>
            <person name="Medigue C."/>
            <person name="Medina N."/>
            <person name="Mellado R.P."/>
            <person name="Mizuno M."/>
            <person name="Moestl D."/>
            <person name="Nakai S."/>
            <person name="Noback M."/>
            <person name="Noone D."/>
            <person name="O'Reilly M."/>
            <person name="Ogawa K."/>
            <person name="Ogiwara A."/>
            <person name="Oudega B."/>
            <person name="Park S.-H."/>
            <person name="Parro V."/>
            <person name="Pohl T.M."/>
            <person name="Portetelle D."/>
            <person name="Porwollik S."/>
            <person name="Prescott A.M."/>
            <person name="Presecan E."/>
            <person name="Pujic P."/>
            <person name="Purnelle B."/>
            <person name="Rapoport G."/>
            <person name="Rey M."/>
            <person name="Reynolds S."/>
            <person name="Rieger M."/>
            <person name="Rivolta C."/>
            <person name="Rocha E."/>
            <person name="Roche B."/>
            <person name="Rose M."/>
            <person name="Sadaie Y."/>
            <person name="Sato T."/>
            <person name="Scanlan E."/>
            <person name="Schleich S."/>
            <person name="Schroeter R."/>
            <person name="Scoffone F."/>
            <person name="Sekiguchi J."/>
            <person name="Sekowska A."/>
            <person name="Seror S.J."/>
            <person name="Serror P."/>
            <person name="Shin B.-S."/>
            <person name="Soldo B."/>
            <person name="Sorokin A."/>
            <person name="Tacconi E."/>
            <person name="Takagi T."/>
            <person name="Takahashi H."/>
            <person name="Takemaru K."/>
            <person name="Takeuchi M."/>
            <person name="Tamakoshi A."/>
            <person name="Tanaka T."/>
            <person name="Terpstra P."/>
            <person name="Tognoni A."/>
            <person name="Tosato V."/>
            <person name="Uchiyama S."/>
            <person name="Vandenbol M."/>
            <person name="Vannier F."/>
            <person name="Vassarotti A."/>
            <person name="Viari A."/>
            <person name="Wambutt R."/>
            <person name="Wedler E."/>
            <person name="Wedler H."/>
            <person name="Weitzenegger T."/>
            <person name="Winters P."/>
            <person name="Wipat A."/>
            <person name="Yamamoto H."/>
            <person name="Yamane K."/>
            <person name="Yasumoto K."/>
            <person name="Yata K."/>
            <person name="Yoshida K."/>
            <person name="Yoshikawa H.-F."/>
            <person name="Zumstein E."/>
            <person name="Yoshikawa H."/>
            <person name="Danchin A."/>
        </authorList>
    </citation>
    <scope>NUCLEOTIDE SEQUENCE [LARGE SCALE GENOMIC DNA]</scope>
    <source>
        <strain>168</strain>
    </source>
</reference>
<evidence type="ECO:0000255" key="1"/>
<organism>
    <name type="scientific">Bacillus subtilis (strain 168)</name>
    <dbReference type="NCBI Taxonomy" id="224308"/>
    <lineage>
        <taxon>Bacteria</taxon>
        <taxon>Bacillati</taxon>
        <taxon>Bacillota</taxon>
        <taxon>Bacilli</taxon>
        <taxon>Bacillales</taxon>
        <taxon>Bacillaceae</taxon>
        <taxon>Bacillus</taxon>
    </lineage>
</organism>
<accession>O31436</accession>
<accession>Q7DL54</accession>
<sequence length="285" mass="31503">MVKKWLIQFAVMLSVLSTFTYSASAVGVTAITGNNSFDTAMPIGYWKYKNIDTTILEAGQDEAYFTFTANKGEKVYMRSTYQSAYTGMKIEIYDKNRIPVSQGTEVINPNTFSSFIYANADAQNTTDTFYVKVSRGTYTGNMYFTLSIEDRIKSGSGTFQFSGVAENKGNTSLSPSGSDSSVIKVDLTNQSGIPRDAIVTRVQTTATQTPSQGNTRHLIMTSENNEWSRALVNSSTSGSYDISLSDQLSVAKVWSFKYNTLATARSTMSNVKAKIDYEYDVTKQF</sequence>
<name>YBDN_BACSU</name>